<keyword id="KW-0091">Biomineralization</keyword>
<keyword id="KW-0997">Cell inner membrane</keyword>
<keyword id="KW-1003">Cell membrane</keyword>
<keyword id="KW-0349">Heme</keyword>
<keyword id="KW-0408">Iron</keyword>
<keyword id="KW-0472">Membrane</keyword>
<keyword id="KW-0479">Metal-binding</keyword>
<keyword id="KW-0560">Oxidoreductase</keyword>
<keyword id="KW-0812">Transmembrane</keyword>
<keyword id="KW-1133">Transmembrane helix</keyword>
<sequence length="275" mass="28912">MNSKVALLVVGLAVVLALVIGRQGPVAPQATNTQSQAVAAGPVAAPVAFPQPLYPQAANVAMPVEPDPAAGGGTAPATESPLPNFVPRKLKVFEGHWQGMDGRLMTEELARKLNYPRGLQGVLLGEVTLNAAFSGLLAGDLIVRIDDTPVTDMESFKAASRTVANRSDARISVLRKDNRPGAPVVRKLTVVLREAEGGLGFAQLEGAPMILAGDPRPHGYRGACTDCHPIGQGFELTPDPDLISLPPPTITRDMVARSVNPHEVRGPCEACHVIK</sequence>
<feature type="chain" id="PRO_0000447783" description="Multi-heme protein MamP" evidence="2">
    <location>
        <begin position="1"/>
        <end position="275"/>
    </location>
</feature>
<feature type="topological domain" description="Cytoplasmic" evidence="10">
    <location>
        <begin position="1"/>
        <end position="6"/>
    </location>
</feature>
<feature type="transmembrane region" evidence="13">
    <location>
        <begin position="7"/>
        <end position="20"/>
    </location>
</feature>
<feature type="topological domain" description="Lumenal" evidence="16">
    <location>
        <begin position="21"/>
        <end position="275"/>
    </location>
</feature>
<feature type="region of interest" description="PDZ" evidence="13">
    <location>
        <begin position="89"/>
        <end position="206"/>
    </location>
</feature>
<feature type="short sequence motif" description="MCR (magnetochrome) 1" evidence="13">
    <location>
        <begin position="210"/>
        <end position="230"/>
    </location>
</feature>
<feature type="short sequence motif" description="MCR 2" evidence="13">
    <location>
        <begin position="250"/>
        <end position="274"/>
    </location>
</feature>
<feature type="binding site" description="covalent" evidence="1 12">
    <location>
        <position position="224"/>
    </location>
    <ligand>
        <name>heme</name>
        <dbReference type="ChEBI" id="CHEBI:30413"/>
        <label>1</label>
    </ligand>
</feature>
<feature type="binding site" description="covalent" evidence="1 12">
    <location>
        <position position="227"/>
    </location>
    <ligand>
        <name>heme</name>
        <dbReference type="ChEBI" id="CHEBI:30413"/>
        <label>1</label>
    </ligand>
</feature>
<feature type="binding site" description="axial binding residue" evidence="1 12">
    <location>
        <position position="228"/>
    </location>
    <ligand>
        <name>heme</name>
        <dbReference type="ChEBI" id="CHEBI:30413"/>
        <label>1</label>
    </ligand>
    <ligandPart>
        <name>Fe</name>
        <dbReference type="ChEBI" id="CHEBI:18248"/>
    </ligandPart>
</feature>
<feature type="binding site" description="covalent" evidence="1 12">
    <location>
        <position position="268"/>
    </location>
    <ligand>
        <name>heme</name>
        <dbReference type="ChEBI" id="CHEBI:30413"/>
        <label>2</label>
    </ligand>
</feature>
<feature type="binding site" description="covalent" evidence="1 12">
    <location>
        <position position="271"/>
    </location>
    <ligand>
        <name>heme</name>
        <dbReference type="ChEBI" id="CHEBI:30413"/>
        <label>2</label>
    </ligand>
</feature>
<feature type="binding site" description="axial binding residue" evidence="1 12">
    <location>
        <position position="272"/>
    </location>
    <ligand>
        <name>heme</name>
        <dbReference type="ChEBI" id="CHEBI:30413"/>
        <label>2</label>
    </ligand>
    <ligandPart>
        <name>Fe</name>
        <dbReference type="ChEBI" id="CHEBI:18248"/>
    </ligandPart>
</feature>
<feature type="mutagenesis site" description="Loss of magnetic response, no restoration of magnetite particle size." evidence="6">
    <original>CTDCH</original>
    <variation>ATDAA</variation>
    <location>
        <begin position="224"/>
        <end position="228"/>
    </location>
</feature>
<feature type="mutagenesis site" description="No heme binding, makes smaller magnetite crystals; when associated with A-268." evidence="5">
    <original>C</original>
    <variation>A</variation>
    <location>
        <position position="224"/>
    </location>
</feature>
<feature type="mutagenesis site" description="Loss of magnetic response, no restoration of magnetite particle size." evidence="6">
    <original>CEACH</original>
    <variation>AEAAA</variation>
    <location>
        <begin position="268"/>
        <end position="272"/>
    </location>
</feature>
<feature type="mutagenesis site" description="No heme binding, makes smaller magnetite crystals; when associated with A-224." evidence="5">
    <original>C</original>
    <variation>A</variation>
    <location>
        <position position="268"/>
    </location>
</feature>
<gene>
    <name type="primary">mamP</name>
    <name type="ordered locus">amb0970</name>
</gene>
<dbReference type="EC" id="1.-.-.-" evidence="6"/>
<dbReference type="EMBL" id="AP007255">
    <property type="protein sequence ID" value="BAE49774.1"/>
    <property type="molecule type" value="Genomic_DNA"/>
</dbReference>
<dbReference type="RefSeq" id="WP_011383401.1">
    <property type="nucleotide sequence ID" value="NC_007626.1"/>
</dbReference>
<dbReference type="SMR" id="Q2W8Q1"/>
<dbReference type="STRING" id="342108.amb0970"/>
<dbReference type="KEGG" id="mag:amb0970"/>
<dbReference type="HOGENOM" id="CLU_1029742_0_0_5"/>
<dbReference type="OrthoDB" id="7361255at2"/>
<dbReference type="Proteomes" id="UP000007058">
    <property type="component" value="Chromosome"/>
</dbReference>
<dbReference type="GO" id="GO:0005886">
    <property type="term" value="C:plasma membrane"/>
    <property type="evidence" value="ECO:0000314"/>
    <property type="project" value="UniProtKB"/>
</dbReference>
<dbReference type="GO" id="GO:0046872">
    <property type="term" value="F:metal ion binding"/>
    <property type="evidence" value="ECO:0007669"/>
    <property type="project" value="UniProtKB-KW"/>
</dbReference>
<dbReference type="GO" id="GO:0016491">
    <property type="term" value="F:oxidoreductase activity"/>
    <property type="evidence" value="ECO:0007669"/>
    <property type="project" value="UniProtKB-KW"/>
</dbReference>
<dbReference type="Gene3D" id="2.30.42.60">
    <property type="match status" value="1"/>
</dbReference>
<dbReference type="InterPro" id="IPR040963">
    <property type="entry name" value="MCR"/>
</dbReference>
<dbReference type="InterPro" id="IPR036034">
    <property type="entry name" value="PDZ_sf"/>
</dbReference>
<dbReference type="NCBIfam" id="NF040965">
    <property type="entry name" value="MamP"/>
    <property type="match status" value="1"/>
</dbReference>
<dbReference type="Pfam" id="PF18509">
    <property type="entry name" value="MCR"/>
    <property type="match status" value="1"/>
</dbReference>
<dbReference type="SUPFAM" id="SSF50156">
    <property type="entry name" value="PDZ domain-like"/>
    <property type="match status" value="1"/>
</dbReference>
<comment type="function">
    <text evidence="5 6 11">Involved in redox-control of magnetite formation; oxidizes Fe(2+) to Fe(3+) or to mixed-valent Fe(2+)-Fe(3+) oxide minerals (PubMed:25775527). May control magnetite crystal size and number (Probable). Overproduction of MamP leads to more crystals than normal during exponential growth of normal size; in stationary phase crystal numbers become wild-type (PubMed:25048532).</text>
</comment>
<comment type="cofactor">
    <cofactor evidence="1 14 15">
        <name>heme</name>
        <dbReference type="ChEBI" id="CHEBI:30413"/>
    </cofactor>
    <text evidence="1 14 15">Binds 2 heme groups via the 2 magnetochrome (MCR) motifs.</text>
</comment>
<comment type="biophysicochemical properties">
    <redoxPotential>
        <text evidence="6">E(0) is -89 +/- 11 mV for Fe(3+)-Fe(2+) at pH 7.5.</text>
    </redoxPotential>
</comment>
<comment type="subunit">
    <text evidence="15">Homodimer.</text>
</comment>
<comment type="subcellular location">
    <subcellularLocation>
        <location evidence="14">Cell inner membrane</location>
        <topology evidence="14">Single-pass membrane protein</topology>
    </subcellularLocation>
    <text evidence="5">Not seen in magnetosome membranes.</text>
</comment>
<comment type="induction">
    <text evidence="5 11">Constitutively expressed, levels are high for 24 hours after innoculation then decrease in stationary phase (up to 144 hours) (at protein level) (PubMed:25048532). Part of the probable 18 gene mamAB operon (Probable).</text>
</comment>
<comment type="domain">
    <text evidence="1">The dimer forms a pocket of about 8 X 15 Angstroms, lined with acidic residues, which may bind 2 Fe(2+) ions.</text>
</comment>
<comment type="PTM">
    <text evidence="7 8">Subject to proteolytic cleavage which requires both MamE and MamO.</text>
</comment>
<comment type="disruption phenotype">
    <text evidence="3 6">Cells have a weak magnetic response and make magnetosome membranes. Has fewer but larger magnetite crystals (PubMed:20212111). Makes small, flaky magnetite crystals, does not alter subcellular localization of MamC, MamF, MamI or MmsF (PubMed:25775527). Deletion of genes mamH to mamV (amb0961 to amb0978) gives cells with no magnetosomes and no magnetic response (PubMed:20212111).</text>
</comment>
<comment type="miscellaneous">
    <text evidence="10">This bacteria makes up to 20 cubo-octahedral magnetosomes of about 45 nm in diameter which contain membrane-bound crystals of magnetite (Fe(3)O(4)).</text>
</comment>
<comment type="miscellaneous">
    <text evidence="4">Expression of just the minimal mamAB gene cluster (amb0961 to amb0978), including this gene, is sufficient to form a minimal magnetosome chain with small magnetite particles.</text>
</comment>
<comment type="similarity">
    <text evidence="10">Belongs to the magnetosome MamP family.</text>
</comment>
<protein>
    <recommendedName>
        <fullName evidence="10">Multi-heme protein MamP</fullName>
        <ecNumber evidence="6">1.-.-.-</ecNumber>
    </recommendedName>
    <alternativeName>
        <fullName evidence="10">Magnetochrome MamP</fullName>
    </alternativeName>
    <alternativeName>
        <fullName evidence="9">Magnetosome-associated protein MamP</fullName>
    </alternativeName>
</protein>
<accession>Q2W8Q1</accession>
<proteinExistence type="evidence at protein level"/>
<name>MAMP_PARM1</name>
<reference key="1">
    <citation type="journal article" date="2005" name="DNA Res.">
        <title>Complete genome sequence of the facultative anaerobic magnetotactic bacterium Magnetospirillum sp. strain AMB-1.</title>
        <authorList>
            <person name="Matsunaga T."/>
            <person name="Okamura Y."/>
            <person name="Fukuda Y."/>
            <person name="Wahyudi A.T."/>
            <person name="Murase Y."/>
            <person name="Takeyama H."/>
        </authorList>
    </citation>
    <scope>NUCLEOTIDE SEQUENCE [LARGE SCALE GENOMIC DNA]</scope>
    <source>
        <strain>ATCC 700264 / AMB-1</strain>
    </source>
</reference>
<reference key="2">
    <citation type="journal article" date="2010" name="Proc. Natl. Acad. Sci. U.S.A.">
        <title>Comprehensive genetic dissection of the magnetosome gene island reveals the step-wise assembly of a prokaryotic organelle.</title>
        <authorList>
            <person name="Murat D."/>
            <person name="Quinlan A."/>
            <person name="Vali H."/>
            <person name="Komeili A."/>
        </authorList>
    </citation>
    <scope>FUNCTION</scope>
    <scope>PROBABLE OPERON</scope>
    <scope>DISRUPTION PHENOTYPE</scope>
    <source>
        <strain>ATCC 700264 / AMB-1</strain>
    </source>
</reference>
<reference key="3">
    <citation type="journal article" date="2012" name="Biochem. Soc. Trans.">
        <title>Magnetochrome: a c-type cytochrome domain specific to magnetotatic bacteria.</title>
        <authorList>
            <person name="Siponen M.I."/>
            <person name="Adryanczyk G."/>
            <person name="Ginet N."/>
            <person name="Arnoux P."/>
            <person name="Pignol D."/>
        </authorList>
    </citation>
    <scope>POSSIBLE COFACTOR</scope>
    <source>
        <strain>ATCC 700264 / AMB-1</strain>
    </source>
</reference>
<reference key="4">
    <citation type="journal article" date="2012" name="Mol. Microbiol.">
        <title>The magnetosome membrane protein, MmsF, is a major regulator of magnetite biomineralization in Magnetospirillum magneticum AMB-1.</title>
        <authorList>
            <person name="Murat D."/>
            <person name="Falahati V."/>
            <person name="Bertinetti L."/>
            <person name="Csencsits R."/>
            <person name="Koernig A."/>
            <person name="Downing K."/>
            <person name="Faivre D."/>
            <person name="Komeili A."/>
        </authorList>
    </citation>
    <scope>MINIMAL MAGNETOSOME ISLAND</scope>
    <source>
        <strain>ATCC 700264 / AMB-1</strain>
    </source>
</reference>
<reference key="5">
    <citation type="journal article" date="2013" name="Nature">
        <title>Structural insight into magnetochrome-mediated magnetite biomineralization.</title>
        <authorList>
            <person name="Siponen M.I."/>
            <person name="Legrand P."/>
            <person name="Widdrat M."/>
            <person name="Jones S.R."/>
            <person name="Zhang W.J."/>
            <person name="Chang M.C."/>
            <person name="Faivre D."/>
            <person name="Arnoux P."/>
            <person name="Pignol D."/>
        </authorList>
    </citation>
    <scope>DOMAIN</scope>
</reference>
<reference key="6">
    <citation type="journal article" date="2014" name="FEMS Microbiol. Lett.">
        <title>A magnetosome-associated cytochrome MamP is critical for magnetite crystal growth during the exponential growth phase.</title>
        <authorList>
            <person name="Taoka A."/>
            <person name="Eguchi Y."/>
            <person name="Mise S."/>
            <person name="Oestreicher Z."/>
            <person name="Uno F."/>
            <person name="Fukumori Y."/>
        </authorList>
    </citation>
    <scope>FUNCTION</scope>
    <scope>COFACTOR</scope>
    <scope>SUBCELLULAR LOCATION</scope>
    <scope>INDUCTION</scope>
    <scope>MUTAGENESIS OF CYS-224 AND CYS-268</scope>
    <source>
        <strain>ATCC 700264 / AMB-1</strain>
    </source>
</reference>
<reference key="7">
    <citation type="journal article" date="2015" name="Proc. Natl. Acad. Sci. U.S.A.">
        <title>Genetic and biochemical investigations of the role of MamP in redox control of iron biomineralization in Magnetospirillum magneticum.</title>
        <authorList>
            <person name="Jones S.R."/>
            <person name="Wilson T.D."/>
            <person name="Brown M.E."/>
            <person name="Rahn-Lee L."/>
            <person name="Yu Y."/>
            <person name="Fredriksen L.L."/>
            <person name="Ozyamak E."/>
            <person name="Komeili A."/>
            <person name="Chang M.C."/>
        </authorList>
    </citation>
    <scope>FUNCTION</scope>
    <scope>COFACTOR</scope>
    <scope>BIOPHYSICOCHEMICAL PROPERTIES</scope>
    <scope>SUBUNIT</scope>
    <scope>DISRUPTION PHENOTYPE</scope>
    <scope>HEME-BINDING</scope>
    <scope>MUTAGENESIS OF 224-CYS--HIS-228 AND 268-CYS--HIS-272</scope>
    <source>
        <strain>ATCC 700264 / AMB-1</strain>
    </source>
</reference>
<reference key="8">
    <citation type="journal article" date="2016" name="J. Biol. Chem.">
        <title>Magnetite biomineralization in Magnetospirillum magneticum is regulated by a switch-like behavior in the HtrA protease MamE.</title>
        <authorList>
            <person name="Hershey D.M."/>
            <person name="Browne P.J."/>
            <person name="Iavarone A.T."/>
            <person name="Teyra J."/>
            <person name="Lee E.H."/>
            <person name="Sidhu S.S."/>
            <person name="Komeili A."/>
        </authorList>
    </citation>
    <scope>PROTEOLYTIC CLEAVAGE</scope>
    <scope>PROBABLE TOPOLOGY</scope>
    <source>
        <strain>ATCC 700264 / AMB-1</strain>
    </source>
</reference>
<reference key="9">
    <citation type="journal article" date="2016" name="PLoS Biol.">
        <title>MamO is a repurposed serine protease that promotes magnetite biomineralization through direct transition metal binding in magnetotactic bacteria.</title>
        <authorList>
            <person name="Hershey D.M."/>
            <person name="Ren X."/>
            <person name="Melnyk R.A."/>
            <person name="Browne P.J."/>
            <person name="Ozyamak E."/>
            <person name="Jones S.R."/>
            <person name="Chang M.C."/>
            <person name="Hurley J.H."/>
            <person name="Komeili A."/>
        </authorList>
    </citation>
    <scope>PROTEOLYTIC CLEAVAGE</scope>
    <source>
        <strain>ATCC 700264 / AMB-1</strain>
    </source>
</reference>
<organism>
    <name type="scientific">Paramagnetospirillum magneticum (strain ATCC 700264 / AMB-1)</name>
    <name type="common">Magnetospirillum magneticum</name>
    <dbReference type="NCBI Taxonomy" id="342108"/>
    <lineage>
        <taxon>Bacteria</taxon>
        <taxon>Pseudomonadati</taxon>
        <taxon>Pseudomonadota</taxon>
        <taxon>Alphaproteobacteria</taxon>
        <taxon>Rhodospirillales</taxon>
        <taxon>Magnetospirillaceae</taxon>
        <taxon>Paramagnetospirillum</taxon>
    </lineage>
</organism>
<evidence type="ECO:0000250" key="1">
    <source>
        <dbReference type="UniProtKB" id="A0A1S7LCW6"/>
    </source>
</evidence>
<evidence type="ECO:0000255" key="2"/>
<evidence type="ECO:0000269" key="3">
    <source>
    </source>
</evidence>
<evidence type="ECO:0000269" key="4">
    <source>
    </source>
</evidence>
<evidence type="ECO:0000269" key="5">
    <source>
    </source>
</evidence>
<evidence type="ECO:0000269" key="6">
    <source>
    </source>
</evidence>
<evidence type="ECO:0000269" key="7">
    <source>
    </source>
</evidence>
<evidence type="ECO:0000269" key="8">
    <source>
    </source>
</evidence>
<evidence type="ECO:0000303" key="9">
    <source>
    </source>
</evidence>
<evidence type="ECO:0000305" key="10"/>
<evidence type="ECO:0000305" key="11">
    <source>
    </source>
</evidence>
<evidence type="ECO:0000305" key="12">
    <source>
    </source>
</evidence>
<evidence type="ECO:0000305" key="13">
    <source>
    </source>
</evidence>
<evidence type="ECO:0000305" key="14">
    <source>
    </source>
</evidence>
<evidence type="ECO:0000305" key="15">
    <source>
    </source>
</evidence>
<evidence type="ECO:0000305" key="16">
    <source>
    </source>
</evidence>